<protein>
    <recommendedName>
        <fullName>DNA replication ATP-dependent helicase/nuclease DNA2</fullName>
    </recommendedName>
    <alternativeName>
        <fullName>DNA replication ATP-dependent helicase-like homolog</fullName>
    </alternativeName>
    <domain>
        <recommendedName>
            <fullName>DNA replication nuclease DNA2</fullName>
            <ecNumber>3.1.-.-</ecNumber>
        </recommendedName>
    </domain>
    <domain>
        <recommendedName>
            <fullName>DNA replication ATP-dependent helicase DNA2</fullName>
            <ecNumber>3.6.4.12</ecNumber>
        </recommendedName>
    </domain>
</protein>
<keyword id="KW-0004">4Fe-4S</keyword>
<keyword id="KW-0007">Acetylation</keyword>
<keyword id="KW-0067">ATP-binding</keyword>
<keyword id="KW-0227">DNA damage</keyword>
<keyword id="KW-0234">DNA repair</keyword>
<keyword id="KW-0235">DNA replication</keyword>
<keyword id="KW-0238">DNA-binding</keyword>
<keyword id="KW-0255">Endonuclease</keyword>
<keyword id="KW-0347">Helicase</keyword>
<keyword id="KW-0378">Hydrolase</keyword>
<keyword id="KW-0408">Iron</keyword>
<keyword id="KW-0411">Iron-sulfur</keyword>
<keyword id="KW-0479">Metal-binding</keyword>
<keyword id="KW-0496">Mitochondrion</keyword>
<keyword id="KW-0511">Multifunctional enzyme</keyword>
<keyword id="KW-0540">Nuclease</keyword>
<keyword id="KW-0547">Nucleotide-binding</keyword>
<keyword id="KW-0539">Nucleus</keyword>
<keyword id="KW-1185">Reference proteome</keyword>
<sequence>MERVDELELLMEKSFWQEAEPSAELFQKKKVEASFSKIVLSRGMDNRYLVLAVDIVQSEEGNHEKHLIITASQSLEYKELCILRNDWCSVPVEPGDIIHLEGDCISNTWIIDEDFGYLILYPDMLISGTSIASSIRCMRRAVLSETFRSSDPATRQMLIGTVLHEVFQKAVSDSFAPEKLQELASQTIQEIRHLKEMYRLKLNQDEIKQEVEEYLPSFSKWAGDFMHKHTSTDFPQMQLSLPSDGSNSNSTCNIEVTNSLDIEESIWSPRFGLKGKIDVTVGVKIHRGCKTKYKIMPLELKTGKESNSIEHRSQLVLYTLLSQERRADPEAGLLLYLKTGQMYPVPAKHLDKRELLRLRNQMAFSLFHRINKSTGEKTELAPLPQIIEEQQTCKYCSQMGNCALYSRAVEQQMEDSSVPTSMWPKIKEETQHLKPIHLEYFSLWCLMLTLESQSKDNKRNYQHIWLMPASEMEESGSCIGSLIRIEHVKTVCDGQYLHNFQRKNGAIPITNLMAGDRIILSGEERTLFALSRGYVKEINSTTVTCSLDRNLSGLPESTLFRLDQEEKNCDIDTPLGNLSKLMENTRASQKLRDLIIDFREPQFISYLSSVLPHEAKDTVACILKGLNKPQRQAMKKVLLSKDYTLIVGMPGTGKTTTICTLVRILYACGFSVLLTSYTHSAVDNILLKLAKFKIGFLRLGQIQKVHPDIQKFTEEEICRSKSIKSLALLEELYNSQLIVATTCMGINHPIFSRKTFDFCIVDEASQISQPVCLGPLFFSRRFVLVGDHQQLPPLVLNREARALGMSESLFKRLEQNKNAVVQLTVQYRMNSKIMSLSNKLTYEGKLECGSDKVANAVINLPNFKDVKLELEFYADYSENPWLIAAFEPNNPVCFLNTHKVPAPEQVEKGGVSNIMEAKLVVFLTSVFIKAGCKPSDIGIIAPYRQQLKVISDLLAQSSVGMVEVNTVDRYQGRDKSIVVVSFVRSNEDGTLGELLKDWRRLNVAITRAKHKLILLGCVPSLSRYPPLRKLLNHLNSEKLIIDLPSGEHESLFHLLGDFQRK</sequence>
<reference key="1">
    <citation type="journal article" date="2009" name="Genome Biol.">
        <title>A whole-genome assembly of the domestic cow, Bos taurus.</title>
        <authorList>
            <person name="Zimin A.V."/>
            <person name="Delcher A.L."/>
            <person name="Florea L."/>
            <person name="Kelley D.R."/>
            <person name="Schatz M.C."/>
            <person name="Puiu D."/>
            <person name="Hanrahan F."/>
            <person name="Pertea G."/>
            <person name="Van Tassell C.P."/>
            <person name="Sonstegard T.S."/>
            <person name="Marcais G."/>
            <person name="Roberts M."/>
            <person name="Subramanian P."/>
            <person name="Yorke J.A."/>
            <person name="Salzberg S.L."/>
        </authorList>
    </citation>
    <scope>NUCLEOTIDE SEQUENCE [LARGE SCALE GENOMIC DNA]</scope>
    <source>
        <strain>Hereford</strain>
    </source>
</reference>
<comment type="function">
    <text evidence="2">Key enzyme involved in DNA replication and DNA repair in nucleus and mitochondrion. Involved in Okazaki fragments processing by cleaving long flaps that escape FEN1: flaps that are longer than 27 nucleotides are coated by replication protein A complex (RPA), leading to recruit DNA2 which cleaves the flap until it is too short to bind RPA and becomes a substrate for FEN1. Also involved in 5'-end resection of DNA during double-strand break (DSB) repair: recruited by BLM and mediates the cleavage of 5'-ssDNA, while the 3'-ssDNA cleavage is prevented by the presence of RPA. Also involved in DNA replication checkpoint independently of Okazaki fragments processing. Possesses different enzymatic activities, such as single-stranded DNA (ssDNA)-dependent ATPase, 5'-3' helicase and endonuclease activities. While the ATPase and endonuclease activities are well-defined and play a key role in Okazaki fragments processing and DSB repair, the 5'-3' DNA helicase activity is subject to debate. According to various reports, the helicase activity is weak and its function remains largely unclear. Helicase activity may promote the motion of DNA2 on the flap, helping the nuclease function (By similarity).</text>
</comment>
<comment type="catalytic activity">
    <reaction>
        <text>ATP + H2O = ADP + phosphate + H(+)</text>
        <dbReference type="Rhea" id="RHEA:13065"/>
        <dbReference type="ChEBI" id="CHEBI:15377"/>
        <dbReference type="ChEBI" id="CHEBI:15378"/>
        <dbReference type="ChEBI" id="CHEBI:30616"/>
        <dbReference type="ChEBI" id="CHEBI:43474"/>
        <dbReference type="ChEBI" id="CHEBI:456216"/>
        <dbReference type="EC" id="3.6.4.12"/>
    </reaction>
</comment>
<comment type="cofactor">
    <cofactor evidence="1">
        <name>[4Fe-4S] cluster</name>
        <dbReference type="ChEBI" id="CHEBI:49883"/>
    </cofactor>
    <text evidence="1">Binds 1 [4Fe-4S] cluster.</text>
</comment>
<comment type="subunit">
    <text evidence="1">Interacts with BLM and WDHD1.</text>
</comment>
<comment type="subcellular location">
    <subcellularLocation>
        <location evidence="2">Nucleus</location>
    </subcellularLocation>
    <subcellularLocation>
        <location evidence="2">Mitochondrion</location>
    </subcellularLocation>
</comment>
<comment type="PTM">
    <text evidence="1">Acetylated by EP300, leading to stimulate the 5'-3' endonuclease, the 5'-3' helicase and DNA-dependent ATPase activities, possibly by increasing DNA substrate affinity.</text>
</comment>
<comment type="similarity">
    <text evidence="4">Belongs to the DNA2/NAM7 helicase family.</text>
</comment>
<evidence type="ECO:0000250" key="1"/>
<evidence type="ECO:0000250" key="2">
    <source>
        <dbReference type="UniProtKB" id="P51530"/>
    </source>
</evidence>
<evidence type="ECO:0000255" key="3"/>
<evidence type="ECO:0000305" key="4"/>
<name>DNA2_BOVIN</name>
<dbReference type="EC" id="3.1.-.-"/>
<dbReference type="EC" id="3.6.4.12"/>
<dbReference type="EMBL" id="DAAA02061817">
    <property type="status" value="NOT_ANNOTATED_CDS"/>
    <property type="molecule type" value="Genomic_DNA"/>
</dbReference>
<dbReference type="SMR" id="E1BMP7"/>
<dbReference type="FunCoup" id="E1BMP7">
    <property type="interactions" value="1382"/>
</dbReference>
<dbReference type="STRING" id="9913.ENSBTAP00000003395"/>
<dbReference type="PaxDb" id="9913-ENSBTAP00000003395"/>
<dbReference type="VEuPathDB" id="HostDB:ENSBTAG00000002620"/>
<dbReference type="eggNOG" id="KOG1805">
    <property type="taxonomic scope" value="Eukaryota"/>
</dbReference>
<dbReference type="HOGENOM" id="CLU_001666_2_0_1"/>
<dbReference type="InParanoid" id="E1BMP7"/>
<dbReference type="OMA" id="NYCEAAI"/>
<dbReference type="OrthoDB" id="306218at2759"/>
<dbReference type="Reactome" id="R-BTA-174437">
    <property type="pathway name" value="Removal of the Flap Intermediate from the C-strand"/>
</dbReference>
<dbReference type="Reactome" id="R-BTA-5685938">
    <property type="pathway name" value="HDR through Single Strand Annealing (SSA)"/>
</dbReference>
<dbReference type="Reactome" id="R-BTA-5685942">
    <property type="pathway name" value="HDR through Homologous Recombination (HRR)"/>
</dbReference>
<dbReference type="Reactome" id="R-BTA-5693568">
    <property type="pathway name" value="Resolution of D-loop Structures through Holliday Junction Intermediates"/>
</dbReference>
<dbReference type="Reactome" id="R-BTA-5693579">
    <property type="pathway name" value="Homologous DNA Pairing and Strand Exchange"/>
</dbReference>
<dbReference type="Reactome" id="R-BTA-5693607">
    <property type="pathway name" value="Processing of DNA double-strand break ends"/>
</dbReference>
<dbReference type="Reactome" id="R-BTA-5693616">
    <property type="pathway name" value="Presynaptic phase of homologous DNA pairing and strand exchange"/>
</dbReference>
<dbReference type="Reactome" id="R-BTA-6804756">
    <property type="pathway name" value="Regulation of TP53 Activity through Phosphorylation"/>
</dbReference>
<dbReference type="Reactome" id="R-BTA-69166">
    <property type="pathway name" value="Removal of the Flap Intermediate"/>
</dbReference>
<dbReference type="Reactome" id="R-BTA-69473">
    <property type="pathway name" value="G2/M DNA damage checkpoint"/>
</dbReference>
<dbReference type="Proteomes" id="UP000009136">
    <property type="component" value="Chromosome 28"/>
</dbReference>
<dbReference type="Bgee" id="ENSBTAG00000002620">
    <property type="expression patterns" value="Expressed in oocyte and 60 other cell types or tissues"/>
</dbReference>
<dbReference type="GO" id="GO:0005737">
    <property type="term" value="C:cytoplasm"/>
    <property type="evidence" value="ECO:0000318"/>
    <property type="project" value="GO_Central"/>
</dbReference>
<dbReference type="GO" id="GO:0005739">
    <property type="term" value="C:mitochondrion"/>
    <property type="evidence" value="ECO:0007669"/>
    <property type="project" value="UniProtKB-SubCell"/>
</dbReference>
<dbReference type="GO" id="GO:0005634">
    <property type="term" value="C:nucleus"/>
    <property type="evidence" value="ECO:0007669"/>
    <property type="project" value="UniProtKB-SubCell"/>
</dbReference>
<dbReference type="GO" id="GO:0051539">
    <property type="term" value="F:4 iron, 4 sulfur cluster binding"/>
    <property type="evidence" value="ECO:0007669"/>
    <property type="project" value="UniProtKB-KW"/>
</dbReference>
<dbReference type="GO" id="GO:0043139">
    <property type="term" value="F:5'-3' DNA helicase activity"/>
    <property type="evidence" value="ECO:0000250"/>
    <property type="project" value="UniProtKB"/>
</dbReference>
<dbReference type="GO" id="GO:0017108">
    <property type="term" value="F:5'-flap endonuclease activity"/>
    <property type="evidence" value="ECO:0000250"/>
    <property type="project" value="UniProtKB"/>
</dbReference>
<dbReference type="GO" id="GO:0005524">
    <property type="term" value="F:ATP binding"/>
    <property type="evidence" value="ECO:0007669"/>
    <property type="project" value="UniProtKB-KW"/>
</dbReference>
<dbReference type="GO" id="GO:0016887">
    <property type="term" value="F:ATP hydrolysis activity"/>
    <property type="evidence" value="ECO:0000250"/>
    <property type="project" value="UniProtKB"/>
</dbReference>
<dbReference type="GO" id="GO:0003677">
    <property type="term" value="F:DNA binding"/>
    <property type="evidence" value="ECO:0000250"/>
    <property type="project" value="UniProtKB"/>
</dbReference>
<dbReference type="GO" id="GO:0046872">
    <property type="term" value="F:metal ion binding"/>
    <property type="evidence" value="ECO:0007669"/>
    <property type="project" value="UniProtKB-KW"/>
</dbReference>
<dbReference type="GO" id="GO:0004518">
    <property type="term" value="F:nuclease activity"/>
    <property type="evidence" value="ECO:0000250"/>
    <property type="project" value="UniProtKB"/>
</dbReference>
<dbReference type="GO" id="GO:0003723">
    <property type="term" value="F:RNA binding"/>
    <property type="evidence" value="ECO:0000318"/>
    <property type="project" value="GO_Central"/>
</dbReference>
<dbReference type="GO" id="GO:0017116">
    <property type="term" value="F:single-stranded DNA helicase activity"/>
    <property type="evidence" value="ECO:0000250"/>
    <property type="project" value="UniProtKB"/>
</dbReference>
<dbReference type="GO" id="GO:0006284">
    <property type="term" value="P:base-excision repair"/>
    <property type="evidence" value="ECO:0000250"/>
    <property type="project" value="UniProtKB"/>
</dbReference>
<dbReference type="GO" id="GO:0000729">
    <property type="term" value="P:DNA double-strand break processing"/>
    <property type="evidence" value="ECO:0000250"/>
    <property type="project" value="UniProtKB"/>
</dbReference>
<dbReference type="GO" id="GO:0006260">
    <property type="term" value="P:DNA replication"/>
    <property type="evidence" value="ECO:0000250"/>
    <property type="project" value="UniProtKB"/>
</dbReference>
<dbReference type="GO" id="GO:0000076">
    <property type="term" value="P:DNA replication checkpoint signaling"/>
    <property type="evidence" value="ECO:0000250"/>
    <property type="project" value="UniProtKB"/>
</dbReference>
<dbReference type="GO" id="GO:0033567">
    <property type="term" value="P:DNA replication, Okazaki fragment processing"/>
    <property type="evidence" value="ECO:0000250"/>
    <property type="project" value="UniProtKB"/>
</dbReference>
<dbReference type="GO" id="GO:0071932">
    <property type="term" value="P:replication fork reversal"/>
    <property type="evidence" value="ECO:0000318"/>
    <property type="project" value="GO_Central"/>
</dbReference>
<dbReference type="CDD" id="cd18041">
    <property type="entry name" value="DEXXQc_DNA2"/>
    <property type="match status" value="1"/>
</dbReference>
<dbReference type="CDD" id="cd22318">
    <property type="entry name" value="DNA2_N-like"/>
    <property type="match status" value="1"/>
</dbReference>
<dbReference type="CDD" id="cd18808">
    <property type="entry name" value="SF1_C_Upf1"/>
    <property type="match status" value="1"/>
</dbReference>
<dbReference type="FunFam" id="3.40.50.300:FF:000721">
    <property type="entry name" value="DNA replication ATP-dependent helicase/nuclease DNA2"/>
    <property type="match status" value="1"/>
</dbReference>
<dbReference type="FunFam" id="3.40.50.300:FF:000789">
    <property type="entry name" value="DNA replication ATP-dependent helicase/nuclease DNA2"/>
    <property type="match status" value="1"/>
</dbReference>
<dbReference type="FunFam" id="3.40.50.300:FF:000915">
    <property type="entry name" value="DNA replication ATP-dependent helicase/nuclease DNA2"/>
    <property type="match status" value="1"/>
</dbReference>
<dbReference type="Gene3D" id="3.90.320.10">
    <property type="match status" value="1"/>
</dbReference>
<dbReference type="Gene3D" id="3.40.50.300">
    <property type="entry name" value="P-loop containing nucleotide triphosphate hydrolases"/>
    <property type="match status" value="2"/>
</dbReference>
<dbReference type="InterPro" id="IPR026851">
    <property type="entry name" value="Dna2/JHS1_DEXXQ-box"/>
</dbReference>
<dbReference type="InterPro" id="IPR045055">
    <property type="entry name" value="DNA2/NAM7-like"/>
</dbReference>
<dbReference type="InterPro" id="IPR041679">
    <property type="entry name" value="DNA2/NAM7-like_C"/>
</dbReference>
<dbReference type="InterPro" id="IPR041677">
    <property type="entry name" value="DNA2/NAM7_AAA_11"/>
</dbReference>
<dbReference type="InterPro" id="IPR048459">
    <property type="entry name" value="DNA2_Rift"/>
</dbReference>
<dbReference type="InterPro" id="IPR014808">
    <property type="entry name" value="DNA_replication_fac_Dna2_N"/>
</dbReference>
<dbReference type="InterPro" id="IPR027417">
    <property type="entry name" value="P-loop_NTPase"/>
</dbReference>
<dbReference type="InterPro" id="IPR011604">
    <property type="entry name" value="PDDEXK-like_dom_sf"/>
</dbReference>
<dbReference type="InterPro" id="IPR047187">
    <property type="entry name" value="SF1_C_Upf1"/>
</dbReference>
<dbReference type="PANTHER" id="PTHR10887:SF433">
    <property type="entry name" value="DNA REPLICATION ATP-DEPENDENT HELICASE_NUCLEASE DNA2"/>
    <property type="match status" value="1"/>
</dbReference>
<dbReference type="PANTHER" id="PTHR10887">
    <property type="entry name" value="DNA2/NAM7 HELICASE FAMILY"/>
    <property type="match status" value="1"/>
</dbReference>
<dbReference type="Pfam" id="PF13086">
    <property type="entry name" value="AAA_11"/>
    <property type="match status" value="2"/>
</dbReference>
<dbReference type="Pfam" id="PF13087">
    <property type="entry name" value="AAA_12"/>
    <property type="match status" value="1"/>
</dbReference>
<dbReference type="Pfam" id="PF08696">
    <property type="entry name" value="Dna2"/>
    <property type="match status" value="1"/>
</dbReference>
<dbReference type="Pfam" id="PF21123">
    <property type="entry name" value="Dna2_Rift"/>
    <property type="match status" value="1"/>
</dbReference>
<dbReference type="SUPFAM" id="SSF52540">
    <property type="entry name" value="P-loop containing nucleoside triphosphate hydrolases"/>
    <property type="match status" value="1"/>
</dbReference>
<accession>E1BMP7</accession>
<gene>
    <name type="primary">DNA2</name>
</gene>
<organism>
    <name type="scientific">Bos taurus</name>
    <name type="common">Bovine</name>
    <dbReference type="NCBI Taxonomy" id="9913"/>
    <lineage>
        <taxon>Eukaryota</taxon>
        <taxon>Metazoa</taxon>
        <taxon>Chordata</taxon>
        <taxon>Craniata</taxon>
        <taxon>Vertebrata</taxon>
        <taxon>Euteleostomi</taxon>
        <taxon>Mammalia</taxon>
        <taxon>Eutheria</taxon>
        <taxon>Laurasiatheria</taxon>
        <taxon>Artiodactyla</taxon>
        <taxon>Ruminantia</taxon>
        <taxon>Pecora</taxon>
        <taxon>Bovidae</taxon>
        <taxon>Bovinae</taxon>
        <taxon>Bos</taxon>
    </lineage>
</organism>
<feature type="chain" id="PRO_0000419465" description="DNA replication ATP-dependent helicase/nuclease DNA2">
    <location>
        <begin position="1"/>
        <end position="1061"/>
    </location>
</feature>
<feature type="region of interest" description="Nuclease activity" evidence="1">
    <location>
        <begin position="82"/>
        <end position="519"/>
    </location>
</feature>
<feature type="region of interest" description="Helicase activity" evidence="1">
    <location>
        <begin position="520"/>
        <end position="1061"/>
    </location>
</feature>
<feature type="binding site" evidence="1">
    <location>
        <position position="137"/>
    </location>
    <ligand>
        <name>[4Fe-4S] cluster</name>
        <dbReference type="ChEBI" id="CHEBI:49883"/>
    </ligand>
</feature>
<feature type="binding site" evidence="1">
    <location>
        <position position="393"/>
    </location>
    <ligand>
        <name>[4Fe-4S] cluster</name>
        <dbReference type="ChEBI" id="CHEBI:49883"/>
    </ligand>
</feature>
<feature type="binding site" evidence="1">
    <location>
        <position position="396"/>
    </location>
    <ligand>
        <name>[4Fe-4S] cluster</name>
        <dbReference type="ChEBI" id="CHEBI:49883"/>
    </ligand>
</feature>
<feature type="binding site" evidence="1">
    <location>
        <position position="402"/>
    </location>
    <ligand>
        <name>[4Fe-4S] cluster</name>
        <dbReference type="ChEBI" id="CHEBI:49883"/>
    </ligand>
</feature>
<feature type="binding site" evidence="3">
    <location>
        <begin position="648"/>
        <end position="655"/>
    </location>
    <ligand>
        <name>ATP</name>
        <dbReference type="ChEBI" id="CHEBI:30616"/>
    </ligand>
</feature>
<proteinExistence type="inferred from homology"/>